<name>SIGA_STRGG</name>
<reference key="1">
    <citation type="journal article" date="2008" name="J. Bacteriol.">
        <title>Genome sequence of the streptomycin-producing microorganism Streptomyces griseus IFO 13350.</title>
        <authorList>
            <person name="Ohnishi Y."/>
            <person name="Ishikawa J."/>
            <person name="Hara H."/>
            <person name="Suzuki H."/>
            <person name="Ikenoya M."/>
            <person name="Ikeda H."/>
            <person name="Yamashita A."/>
            <person name="Hattori M."/>
            <person name="Horinouchi S."/>
        </authorList>
    </citation>
    <scope>NUCLEOTIDE SEQUENCE [LARGE SCALE GENOMIC DNA]</scope>
    <source>
        <strain>JCM 4626 / CBS 651.72 / NBRC 13350 / KCC S-0626 / ISP 5235</strain>
    </source>
</reference>
<reference key="2">
    <citation type="journal article" date="2013" name="Mol. Microbiol.">
        <title>An alternative sigma factor governs the principal sigma factor in Streptomyces griseus.</title>
        <authorList>
            <person name="Otani H."/>
            <person name="Higo A."/>
            <person name="Nanamiya H."/>
            <person name="Horinouchi S."/>
            <person name="Ohnishi Y."/>
        </authorList>
    </citation>
    <scope>INDUCTION</scope>
    <source>
        <strain>JCM 4626 / CBS 651.72 / NBRC 13350 / KCC S-0626 / ISP 5235</strain>
    </source>
</reference>
<proteinExistence type="evidence at transcript level"/>
<keyword id="KW-0963">Cytoplasm</keyword>
<keyword id="KW-0238">DNA-binding</keyword>
<keyword id="KW-0731">Sigma factor</keyword>
<keyword id="KW-0804">Transcription</keyword>
<keyword id="KW-0805">Transcription regulation</keyword>
<evidence type="ECO:0000255" key="1">
    <source>
        <dbReference type="HAMAP-Rule" id="MF_00963"/>
    </source>
</evidence>
<evidence type="ECO:0000256" key="2">
    <source>
        <dbReference type="SAM" id="MobiDB-lite"/>
    </source>
</evidence>
<evidence type="ECO:0000269" key="3">
    <source>
    </source>
</evidence>
<evidence type="ECO:0000303" key="4">
    <source>
    </source>
</evidence>
<evidence type="ECO:0000305" key="5"/>
<evidence type="ECO:0000312" key="6">
    <source>
        <dbReference type="EMBL" id="BAG18530.1"/>
    </source>
</evidence>
<comment type="function">
    <text evidence="1">Sigma factors are initiation factors that promote the attachment of RNA polymerase to specific initiation sites and are then released. This sigma factor is the primary sigma factor during exponential growth.</text>
</comment>
<comment type="subunit">
    <text evidence="1">Interacts transiently with the RNA polymerase catalytic core.</text>
</comment>
<comment type="subcellular location">
    <subcellularLocation>
        <location evidence="1">Cytoplasm</location>
    </subcellularLocation>
</comment>
<comment type="induction">
    <text evidence="3">Transcription is regulated by the alternative sigma factor ShbA.</text>
</comment>
<comment type="similarity">
    <text evidence="1">Belongs to the sigma-70 factor family. RpoD/SigA subfamily.</text>
</comment>
<organism>
    <name type="scientific">Streptomyces griseus subsp. griseus (strain JCM 4626 / CBS 651.72 / NBRC 13350 / KCC S-0626 / ISP 5235)</name>
    <dbReference type="NCBI Taxonomy" id="455632"/>
    <lineage>
        <taxon>Bacteria</taxon>
        <taxon>Bacillati</taxon>
        <taxon>Actinomycetota</taxon>
        <taxon>Actinomycetes</taxon>
        <taxon>Kitasatosporales</taxon>
        <taxon>Streptomycetaceae</taxon>
        <taxon>Streptomyces</taxon>
    </lineage>
</organism>
<accession>B1VXR4</accession>
<feature type="chain" id="PRO_0000442938" description="RNA polymerase principal sigma factor HrdB">
    <location>
        <begin position="1"/>
        <end position="514"/>
    </location>
</feature>
<feature type="DNA-binding region" description="H-T-H motif" evidence="1">
    <location>
        <begin position="475"/>
        <end position="494"/>
    </location>
</feature>
<feature type="region of interest" description="Disordered" evidence="2">
    <location>
        <begin position="135"/>
        <end position="205"/>
    </location>
</feature>
<feature type="region of interest" description="Sigma-70 factor domain-2" evidence="1">
    <location>
        <begin position="281"/>
        <end position="351"/>
    </location>
</feature>
<feature type="region of interest" description="Sigma-70 factor domain-3" evidence="1">
    <location>
        <begin position="360"/>
        <end position="436"/>
    </location>
</feature>
<feature type="region of interest" description="Sigma-70 factor domain-4" evidence="1">
    <location>
        <begin position="449"/>
        <end position="502"/>
    </location>
</feature>
<feature type="short sequence motif" description="Interaction with polymerase core subunit RpoC" evidence="1">
    <location>
        <begin position="305"/>
        <end position="308"/>
    </location>
</feature>
<feature type="compositionally biased region" description="Basic residues" evidence="2">
    <location>
        <begin position="135"/>
        <end position="159"/>
    </location>
</feature>
<protein>
    <recommendedName>
        <fullName evidence="5">RNA polymerase principal sigma factor HrdB</fullName>
    </recommendedName>
    <alternativeName>
        <fullName evidence="1">RNA polymerase sigma factor SigA</fullName>
    </alternativeName>
</protein>
<dbReference type="EMBL" id="AP009493">
    <property type="protein sequence ID" value="BAG18530.1"/>
    <property type="molecule type" value="Genomic_DNA"/>
</dbReference>
<dbReference type="RefSeq" id="WP_003965769.1">
    <property type="nucleotide sequence ID" value="NC_010572.1"/>
</dbReference>
<dbReference type="SMR" id="B1VXR4"/>
<dbReference type="KEGG" id="sgr:SGR_1701"/>
<dbReference type="PATRIC" id="fig|455632.4.peg.1723"/>
<dbReference type="eggNOG" id="COG0568">
    <property type="taxonomic scope" value="Bacteria"/>
</dbReference>
<dbReference type="HOGENOM" id="CLU_014793_2_2_11"/>
<dbReference type="Proteomes" id="UP000001685">
    <property type="component" value="Chromosome"/>
</dbReference>
<dbReference type="GO" id="GO:0005737">
    <property type="term" value="C:cytoplasm"/>
    <property type="evidence" value="ECO:0007669"/>
    <property type="project" value="UniProtKB-SubCell"/>
</dbReference>
<dbReference type="GO" id="GO:0003677">
    <property type="term" value="F:DNA binding"/>
    <property type="evidence" value="ECO:0007669"/>
    <property type="project" value="UniProtKB-UniRule"/>
</dbReference>
<dbReference type="GO" id="GO:0016987">
    <property type="term" value="F:sigma factor activity"/>
    <property type="evidence" value="ECO:0007669"/>
    <property type="project" value="UniProtKB-UniRule"/>
</dbReference>
<dbReference type="GO" id="GO:0006352">
    <property type="term" value="P:DNA-templated transcription initiation"/>
    <property type="evidence" value="ECO:0007669"/>
    <property type="project" value="UniProtKB-UniRule"/>
</dbReference>
<dbReference type="CDD" id="cd06171">
    <property type="entry name" value="Sigma70_r4"/>
    <property type="match status" value="1"/>
</dbReference>
<dbReference type="FunFam" id="1.10.10.10:FF:000002">
    <property type="entry name" value="RNA polymerase sigma factor SigA"/>
    <property type="match status" value="1"/>
</dbReference>
<dbReference type="FunFam" id="1.10.10.10:FF:000004">
    <property type="entry name" value="RNA polymerase sigma factor SigA"/>
    <property type="match status" value="1"/>
</dbReference>
<dbReference type="FunFam" id="1.10.601.10:FF:000001">
    <property type="entry name" value="RNA polymerase sigma factor SigA"/>
    <property type="match status" value="1"/>
</dbReference>
<dbReference type="FunFam" id="1.10.601.10:FF:000003">
    <property type="entry name" value="RNA polymerase sigma factor SigA"/>
    <property type="match status" value="1"/>
</dbReference>
<dbReference type="Gene3D" id="1.10.601.10">
    <property type="entry name" value="RNA Polymerase Primary Sigma Factor"/>
    <property type="match status" value="2"/>
</dbReference>
<dbReference type="Gene3D" id="1.10.10.10">
    <property type="entry name" value="Winged helix-like DNA-binding domain superfamily/Winged helix DNA-binding domain"/>
    <property type="match status" value="2"/>
</dbReference>
<dbReference type="HAMAP" id="MF_00963">
    <property type="entry name" value="Sigma70_RpoD_SigA"/>
    <property type="match status" value="1"/>
</dbReference>
<dbReference type="InterPro" id="IPR014284">
    <property type="entry name" value="RNA_pol_sigma-70_dom"/>
</dbReference>
<dbReference type="InterPro" id="IPR000943">
    <property type="entry name" value="RNA_pol_sigma70"/>
</dbReference>
<dbReference type="InterPro" id="IPR009042">
    <property type="entry name" value="RNA_pol_sigma70_r1_2"/>
</dbReference>
<dbReference type="InterPro" id="IPR007627">
    <property type="entry name" value="RNA_pol_sigma70_r2"/>
</dbReference>
<dbReference type="InterPro" id="IPR007624">
    <property type="entry name" value="RNA_pol_sigma70_r3"/>
</dbReference>
<dbReference type="InterPro" id="IPR007630">
    <property type="entry name" value="RNA_pol_sigma70_r4"/>
</dbReference>
<dbReference type="InterPro" id="IPR013325">
    <property type="entry name" value="RNA_pol_sigma_r2"/>
</dbReference>
<dbReference type="InterPro" id="IPR013324">
    <property type="entry name" value="RNA_pol_sigma_r3/r4-like"/>
</dbReference>
<dbReference type="InterPro" id="IPR012760">
    <property type="entry name" value="RNA_pol_sigma_RpoD_C"/>
</dbReference>
<dbReference type="InterPro" id="IPR050239">
    <property type="entry name" value="Sigma-70_RNA_pol_init_factors"/>
</dbReference>
<dbReference type="InterPro" id="IPR028630">
    <property type="entry name" value="Sigma70_RpoD"/>
</dbReference>
<dbReference type="InterPro" id="IPR036388">
    <property type="entry name" value="WH-like_DNA-bd_sf"/>
</dbReference>
<dbReference type="NCBIfam" id="NF004561">
    <property type="entry name" value="PRK05901.1-3"/>
    <property type="match status" value="1"/>
</dbReference>
<dbReference type="NCBIfam" id="NF005920">
    <property type="entry name" value="PRK07921.1"/>
    <property type="match status" value="1"/>
</dbReference>
<dbReference type="NCBIfam" id="TIGR02393">
    <property type="entry name" value="RpoD_Cterm"/>
    <property type="match status" value="1"/>
</dbReference>
<dbReference type="NCBIfam" id="TIGR02937">
    <property type="entry name" value="sigma70-ECF"/>
    <property type="match status" value="1"/>
</dbReference>
<dbReference type="PANTHER" id="PTHR30603:SF59">
    <property type="entry name" value="RNA POLYMERASE PRINCIPAL SIGMA FACTOR HRDA"/>
    <property type="match status" value="1"/>
</dbReference>
<dbReference type="PANTHER" id="PTHR30603">
    <property type="entry name" value="RNA POLYMERASE SIGMA FACTOR RPO"/>
    <property type="match status" value="1"/>
</dbReference>
<dbReference type="Pfam" id="PF00140">
    <property type="entry name" value="Sigma70_r1_2"/>
    <property type="match status" value="1"/>
</dbReference>
<dbReference type="Pfam" id="PF04542">
    <property type="entry name" value="Sigma70_r2"/>
    <property type="match status" value="1"/>
</dbReference>
<dbReference type="Pfam" id="PF04539">
    <property type="entry name" value="Sigma70_r3"/>
    <property type="match status" value="1"/>
</dbReference>
<dbReference type="Pfam" id="PF04545">
    <property type="entry name" value="Sigma70_r4"/>
    <property type="match status" value="1"/>
</dbReference>
<dbReference type="PRINTS" id="PR00046">
    <property type="entry name" value="SIGMA70FCT"/>
</dbReference>
<dbReference type="SUPFAM" id="SSF88946">
    <property type="entry name" value="Sigma2 domain of RNA polymerase sigma factors"/>
    <property type="match status" value="1"/>
</dbReference>
<dbReference type="SUPFAM" id="SSF88659">
    <property type="entry name" value="Sigma3 and sigma4 domains of RNA polymerase sigma factors"/>
    <property type="match status" value="2"/>
</dbReference>
<dbReference type="PROSITE" id="PS00715">
    <property type="entry name" value="SIGMA70_1"/>
    <property type="match status" value="1"/>
</dbReference>
<dbReference type="PROSITE" id="PS00716">
    <property type="entry name" value="SIGMA70_2"/>
    <property type="match status" value="1"/>
</dbReference>
<gene>
    <name evidence="4" type="primary">hrdB</name>
    <name evidence="1" type="synonym">sigA</name>
    <name evidence="6" type="ordered locus">SGR_1701</name>
</gene>
<sequence>MSASTSRTLPPEIAESESVMALIERGKADGQIAGDDVRRAFEADQIPPTQWKNVLRSLNQILEEEGVTLMVSAAESPKRARKSVAAKSPVKRTATKTVAAKTTVTRTVAATAAPAVESADAADDAVAAAPAKKTAAKKATAKKAAAKKTTAKKTAAKKSGKQDDEILDGDEAAEEVKAGKGEEEEGEGENKGFVLSDDDEDDAPAQQVAVAGATADPVKDYLKQIGKVPLLNAEQEVELAKRIEAGLFAEDKLANADKLAPKLKRELEIIAEDGRRAKNHLLEANLRLVVSLAKRYTGRGMLFLDLIQEGNLGLIRAVEKFDYTKGYKFSTYATWWIRQAITRAMADQARTIRIPVHMVEVINKLARVQRQMLQDLGREPTPEELAKELDMTPEKVIEVQKYGREPISLHTPLGEDGDSEFGDLIEDSEAVVPADAVSFTLLQEQLHSVLDTLSEREAGVVSMRFGLTDGQPKTLDEIGKVYGVTRERIRQIESKTMSKLRHPSRSQVLRDYLD</sequence>